<feature type="chain" id="PRO_0000267446" description="Nucleoside triphosphate pyrophosphatase">
    <location>
        <begin position="1"/>
        <end position="184"/>
    </location>
</feature>
<feature type="active site" description="Proton acceptor" evidence="1">
    <location>
        <position position="71"/>
    </location>
</feature>
<sequence>MLASASPARRRLLEQAGIPHQVRVSGVDEDQIQHAEPVELVKLLAQAKAQAVAQRLDPSGDAEITAVLGCDSVLSFEGQVFGKPSGPVEAIERWQRMAGSCGSLLTGHCLIRRRQPEVLACVETLVRFAPLSQAEIEAYVASGEPLQCAGGFALEGRGGLCIDGLDGCYSNVIGLSLPWLRTVL</sequence>
<evidence type="ECO:0000255" key="1">
    <source>
        <dbReference type="HAMAP-Rule" id="MF_00528"/>
    </source>
</evidence>
<dbReference type="EC" id="3.6.1.9" evidence="1"/>
<dbReference type="EMBL" id="CP000110">
    <property type="protein sequence ID" value="ABB34537.1"/>
    <property type="molecule type" value="Genomic_DNA"/>
</dbReference>
<dbReference type="RefSeq" id="WP_011363763.1">
    <property type="nucleotide sequence ID" value="NC_007516.1"/>
</dbReference>
<dbReference type="SMR" id="Q3ALJ5"/>
<dbReference type="STRING" id="110662.Syncc9605_0768"/>
<dbReference type="KEGG" id="syd:Syncc9605_0768"/>
<dbReference type="eggNOG" id="COG0424">
    <property type="taxonomic scope" value="Bacteria"/>
</dbReference>
<dbReference type="HOGENOM" id="CLU_040416_1_2_3"/>
<dbReference type="OrthoDB" id="9807767at2"/>
<dbReference type="GO" id="GO:0005737">
    <property type="term" value="C:cytoplasm"/>
    <property type="evidence" value="ECO:0007669"/>
    <property type="project" value="UniProtKB-SubCell"/>
</dbReference>
<dbReference type="GO" id="GO:0047429">
    <property type="term" value="F:nucleoside triphosphate diphosphatase activity"/>
    <property type="evidence" value="ECO:0007669"/>
    <property type="project" value="UniProtKB-EC"/>
</dbReference>
<dbReference type="GO" id="GO:0009117">
    <property type="term" value="P:nucleotide metabolic process"/>
    <property type="evidence" value="ECO:0007669"/>
    <property type="project" value="UniProtKB-KW"/>
</dbReference>
<dbReference type="CDD" id="cd00555">
    <property type="entry name" value="Maf"/>
    <property type="match status" value="1"/>
</dbReference>
<dbReference type="Gene3D" id="3.90.950.10">
    <property type="match status" value="1"/>
</dbReference>
<dbReference type="HAMAP" id="MF_00528">
    <property type="entry name" value="Maf"/>
    <property type="match status" value="1"/>
</dbReference>
<dbReference type="InterPro" id="IPR029001">
    <property type="entry name" value="ITPase-like_fam"/>
</dbReference>
<dbReference type="InterPro" id="IPR003697">
    <property type="entry name" value="Maf-like"/>
</dbReference>
<dbReference type="NCBIfam" id="TIGR00172">
    <property type="entry name" value="maf"/>
    <property type="match status" value="1"/>
</dbReference>
<dbReference type="PANTHER" id="PTHR43213">
    <property type="entry name" value="BIFUNCTIONAL DTTP/UTP PYROPHOSPHATASE/METHYLTRANSFERASE PROTEIN-RELATED"/>
    <property type="match status" value="1"/>
</dbReference>
<dbReference type="PANTHER" id="PTHR43213:SF5">
    <property type="entry name" value="BIFUNCTIONAL DTTP_UTP PYROPHOSPHATASE_METHYLTRANSFERASE PROTEIN-RELATED"/>
    <property type="match status" value="1"/>
</dbReference>
<dbReference type="Pfam" id="PF02545">
    <property type="entry name" value="Maf"/>
    <property type="match status" value="1"/>
</dbReference>
<dbReference type="PIRSF" id="PIRSF006305">
    <property type="entry name" value="Maf"/>
    <property type="match status" value="1"/>
</dbReference>
<dbReference type="SUPFAM" id="SSF52972">
    <property type="entry name" value="ITPase-like"/>
    <property type="match status" value="1"/>
</dbReference>
<comment type="function">
    <text evidence="1">Nucleoside triphosphate pyrophosphatase. May have a dual role in cell division arrest and in preventing the incorporation of modified nucleotides into cellular nucleic acids.</text>
</comment>
<comment type="catalytic activity">
    <reaction evidence="1">
        <text>a ribonucleoside 5'-triphosphate + H2O = a ribonucleoside 5'-phosphate + diphosphate + H(+)</text>
        <dbReference type="Rhea" id="RHEA:23996"/>
        <dbReference type="ChEBI" id="CHEBI:15377"/>
        <dbReference type="ChEBI" id="CHEBI:15378"/>
        <dbReference type="ChEBI" id="CHEBI:33019"/>
        <dbReference type="ChEBI" id="CHEBI:58043"/>
        <dbReference type="ChEBI" id="CHEBI:61557"/>
        <dbReference type="EC" id="3.6.1.9"/>
    </reaction>
</comment>
<comment type="catalytic activity">
    <reaction evidence="1">
        <text>a 2'-deoxyribonucleoside 5'-triphosphate + H2O = a 2'-deoxyribonucleoside 5'-phosphate + diphosphate + H(+)</text>
        <dbReference type="Rhea" id="RHEA:44644"/>
        <dbReference type="ChEBI" id="CHEBI:15377"/>
        <dbReference type="ChEBI" id="CHEBI:15378"/>
        <dbReference type="ChEBI" id="CHEBI:33019"/>
        <dbReference type="ChEBI" id="CHEBI:61560"/>
        <dbReference type="ChEBI" id="CHEBI:65317"/>
        <dbReference type="EC" id="3.6.1.9"/>
    </reaction>
</comment>
<comment type="cofactor">
    <cofactor evidence="1">
        <name>a divalent metal cation</name>
        <dbReference type="ChEBI" id="CHEBI:60240"/>
    </cofactor>
</comment>
<comment type="subcellular location">
    <subcellularLocation>
        <location evidence="1">Cytoplasm</location>
    </subcellularLocation>
</comment>
<comment type="similarity">
    <text evidence="1">Belongs to the Maf family.</text>
</comment>
<organism>
    <name type="scientific">Synechococcus sp. (strain CC9605)</name>
    <dbReference type="NCBI Taxonomy" id="110662"/>
    <lineage>
        <taxon>Bacteria</taxon>
        <taxon>Bacillati</taxon>
        <taxon>Cyanobacteriota</taxon>
        <taxon>Cyanophyceae</taxon>
        <taxon>Synechococcales</taxon>
        <taxon>Synechococcaceae</taxon>
        <taxon>Synechococcus</taxon>
    </lineage>
</organism>
<gene>
    <name type="ordered locus">Syncc9605_0768</name>
</gene>
<accession>Q3ALJ5</accession>
<proteinExistence type="inferred from homology"/>
<protein>
    <recommendedName>
        <fullName evidence="1">Nucleoside triphosphate pyrophosphatase</fullName>
        <ecNumber evidence="1">3.6.1.9</ecNumber>
    </recommendedName>
    <alternativeName>
        <fullName evidence="1">Nucleotide pyrophosphatase</fullName>
        <shortName evidence="1">Nucleotide PPase</shortName>
    </alternativeName>
</protein>
<reference key="1">
    <citation type="submission" date="2005-07" db="EMBL/GenBank/DDBJ databases">
        <title>Complete sequence of Synechococcus sp. CC9605.</title>
        <authorList>
            <consortium name="US DOE Joint Genome Institute"/>
            <person name="Copeland A."/>
            <person name="Lucas S."/>
            <person name="Lapidus A."/>
            <person name="Barry K."/>
            <person name="Detter J.C."/>
            <person name="Glavina T."/>
            <person name="Hammon N."/>
            <person name="Israni S."/>
            <person name="Pitluck S."/>
            <person name="Schmutz J."/>
            <person name="Martinez M."/>
            <person name="Larimer F."/>
            <person name="Land M."/>
            <person name="Kyrpides N."/>
            <person name="Ivanova N."/>
            <person name="Richardson P."/>
        </authorList>
    </citation>
    <scope>NUCLEOTIDE SEQUENCE [LARGE SCALE GENOMIC DNA]</scope>
    <source>
        <strain>CC9605</strain>
    </source>
</reference>
<keyword id="KW-0963">Cytoplasm</keyword>
<keyword id="KW-0378">Hydrolase</keyword>
<keyword id="KW-0546">Nucleotide metabolism</keyword>
<name>NTPP_SYNSC</name>